<accession>A4WPE1</accession>
<dbReference type="EC" id="4.2.1.20" evidence="1"/>
<dbReference type="EMBL" id="CP000661">
    <property type="protein sequence ID" value="ABP69255.1"/>
    <property type="molecule type" value="Genomic_DNA"/>
</dbReference>
<dbReference type="SMR" id="A4WPE1"/>
<dbReference type="STRING" id="349102.Rsph17025_0349"/>
<dbReference type="KEGG" id="rsq:Rsph17025_0349"/>
<dbReference type="eggNOG" id="COG0159">
    <property type="taxonomic scope" value="Bacteria"/>
</dbReference>
<dbReference type="HOGENOM" id="CLU_016734_0_4_5"/>
<dbReference type="BioCyc" id="RSPH349102:G1G8M-356-MONOMER"/>
<dbReference type="UniPathway" id="UPA00035">
    <property type="reaction ID" value="UER00044"/>
</dbReference>
<dbReference type="GO" id="GO:0005829">
    <property type="term" value="C:cytosol"/>
    <property type="evidence" value="ECO:0007669"/>
    <property type="project" value="TreeGrafter"/>
</dbReference>
<dbReference type="GO" id="GO:0004834">
    <property type="term" value="F:tryptophan synthase activity"/>
    <property type="evidence" value="ECO:0007669"/>
    <property type="project" value="UniProtKB-UniRule"/>
</dbReference>
<dbReference type="CDD" id="cd04724">
    <property type="entry name" value="Tryptophan_synthase_alpha"/>
    <property type="match status" value="1"/>
</dbReference>
<dbReference type="FunFam" id="3.20.20.70:FF:000037">
    <property type="entry name" value="Tryptophan synthase alpha chain"/>
    <property type="match status" value="1"/>
</dbReference>
<dbReference type="Gene3D" id="3.20.20.70">
    <property type="entry name" value="Aldolase class I"/>
    <property type="match status" value="1"/>
</dbReference>
<dbReference type="HAMAP" id="MF_00131">
    <property type="entry name" value="Trp_synth_alpha"/>
    <property type="match status" value="1"/>
</dbReference>
<dbReference type="InterPro" id="IPR013785">
    <property type="entry name" value="Aldolase_TIM"/>
</dbReference>
<dbReference type="InterPro" id="IPR011060">
    <property type="entry name" value="RibuloseP-bd_barrel"/>
</dbReference>
<dbReference type="InterPro" id="IPR018204">
    <property type="entry name" value="Trp_synthase_alpha_AS"/>
</dbReference>
<dbReference type="InterPro" id="IPR002028">
    <property type="entry name" value="Trp_synthase_suA"/>
</dbReference>
<dbReference type="NCBIfam" id="TIGR00262">
    <property type="entry name" value="trpA"/>
    <property type="match status" value="1"/>
</dbReference>
<dbReference type="PANTHER" id="PTHR43406:SF1">
    <property type="entry name" value="TRYPTOPHAN SYNTHASE ALPHA CHAIN, CHLOROPLASTIC"/>
    <property type="match status" value="1"/>
</dbReference>
<dbReference type="PANTHER" id="PTHR43406">
    <property type="entry name" value="TRYPTOPHAN SYNTHASE, ALPHA CHAIN"/>
    <property type="match status" value="1"/>
</dbReference>
<dbReference type="Pfam" id="PF00290">
    <property type="entry name" value="Trp_syntA"/>
    <property type="match status" value="1"/>
</dbReference>
<dbReference type="SUPFAM" id="SSF51366">
    <property type="entry name" value="Ribulose-phoshate binding barrel"/>
    <property type="match status" value="1"/>
</dbReference>
<dbReference type="PROSITE" id="PS00167">
    <property type="entry name" value="TRP_SYNTHASE_ALPHA"/>
    <property type="match status" value="1"/>
</dbReference>
<keyword id="KW-0028">Amino-acid biosynthesis</keyword>
<keyword id="KW-0057">Aromatic amino acid biosynthesis</keyword>
<keyword id="KW-0456">Lyase</keyword>
<keyword id="KW-0822">Tryptophan biosynthesis</keyword>
<sequence>MTRIDDTFRRLRAEGKKAFVAYIMAGDPDLETSLEVMKGLPGAGVDIIELGMPFTDPMADGPTIQTAGQRALEGGQTLARTLAMVREFRRGDASTPIVMMGYYNPIHARGVDRFLAEAQEAGIDGLIVVDLPPEEDAELCLPAQAAGLNFIRLATPTTDDRRLPKVLQNTSGFVYYVSITGITGAAAAQAVDVAPEVARLKAATDLPVIVGFGITSPEAARDIAGVADGCVVGSAIVKLVAEGRPVAEVLDRVAALAAGAHAA</sequence>
<proteinExistence type="inferred from homology"/>
<name>TRPA_CERS5</name>
<reference key="1">
    <citation type="submission" date="2007-04" db="EMBL/GenBank/DDBJ databases">
        <title>Complete sequence of chromosome of Rhodobacter sphaeroides ATCC 17025.</title>
        <authorList>
            <consortium name="US DOE Joint Genome Institute"/>
            <person name="Copeland A."/>
            <person name="Lucas S."/>
            <person name="Lapidus A."/>
            <person name="Barry K."/>
            <person name="Detter J.C."/>
            <person name="Glavina del Rio T."/>
            <person name="Hammon N."/>
            <person name="Israni S."/>
            <person name="Dalin E."/>
            <person name="Tice H."/>
            <person name="Pitluck S."/>
            <person name="Chertkov O."/>
            <person name="Brettin T."/>
            <person name="Bruce D."/>
            <person name="Han C."/>
            <person name="Schmutz J."/>
            <person name="Larimer F."/>
            <person name="Land M."/>
            <person name="Hauser L."/>
            <person name="Kyrpides N."/>
            <person name="Kim E."/>
            <person name="Richardson P."/>
            <person name="Mackenzie C."/>
            <person name="Choudhary M."/>
            <person name="Donohue T.J."/>
            <person name="Kaplan S."/>
        </authorList>
    </citation>
    <scope>NUCLEOTIDE SEQUENCE [LARGE SCALE GENOMIC DNA]</scope>
    <source>
        <strain>ATCC 17025 / ATH 2.4.3</strain>
    </source>
</reference>
<feature type="chain" id="PRO_1000018272" description="Tryptophan synthase alpha chain">
    <location>
        <begin position="1"/>
        <end position="263"/>
    </location>
</feature>
<feature type="active site" description="Proton acceptor" evidence="1">
    <location>
        <position position="49"/>
    </location>
</feature>
<feature type="active site" description="Proton acceptor" evidence="1">
    <location>
        <position position="60"/>
    </location>
</feature>
<gene>
    <name evidence="1" type="primary">trpA</name>
    <name type="ordered locus">Rsph17025_0349</name>
</gene>
<protein>
    <recommendedName>
        <fullName evidence="1">Tryptophan synthase alpha chain</fullName>
        <ecNumber evidence="1">4.2.1.20</ecNumber>
    </recommendedName>
</protein>
<comment type="function">
    <text evidence="1">The alpha subunit is responsible for the aldol cleavage of indoleglycerol phosphate to indole and glyceraldehyde 3-phosphate.</text>
</comment>
<comment type="catalytic activity">
    <reaction evidence="1">
        <text>(1S,2R)-1-C-(indol-3-yl)glycerol 3-phosphate + L-serine = D-glyceraldehyde 3-phosphate + L-tryptophan + H2O</text>
        <dbReference type="Rhea" id="RHEA:10532"/>
        <dbReference type="ChEBI" id="CHEBI:15377"/>
        <dbReference type="ChEBI" id="CHEBI:33384"/>
        <dbReference type="ChEBI" id="CHEBI:57912"/>
        <dbReference type="ChEBI" id="CHEBI:58866"/>
        <dbReference type="ChEBI" id="CHEBI:59776"/>
        <dbReference type="EC" id="4.2.1.20"/>
    </reaction>
</comment>
<comment type="pathway">
    <text evidence="1">Amino-acid biosynthesis; L-tryptophan biosynthesis; L-tryptophan from chorismate: step 5/5.</text>
</comment>
<comment type="subunit">
    <text evidence="1">Tetramer of two alpha and two beta chains.</text>
</comment>
<comment type="similarity">
    <text evidence="1">Belongs to the TrpA family.</text>
</comment>
<organism>
    <name type="scientific">Cereibacter sphaeroides (strain ATCC 17025 / ATH 2.4.3)</name>
    <name type="common">Rhodobacter sphaeroides</name>
    <dbReference type="NCBI Taxonomy" id="349102"/>
    <lineage>
        <taxon>Bacteria</taxon>
        <taxon>Pseudomonadati</taxon>
        <taxon>Pseudomonadota</taxon>
        <taxon>Alphaproteobacteria</taxon>
        <taxon>Rhodobacterales</taxon>
        <taxon>Paracoccaceae</taxon>
        <taxon>Cereibacter</taxon>
    </lineage>
</organism>
<evidence type="ECO:0000255" key="1">
    <source>
        <dbReference type="HAMAP-Rule" id="MF_00131"/>
    </source>
</evidence>